<name>PUR7_STREM</name>
<accession>B4U5E5</accession>
<protein>
    <recommendedName>
        <fullName evidence="1">Phosphoribosylaminoimidazole-succinocarboxamide synthase</fullName>
        <ecNumber evidence="1">6.3.2.6</ecNumber>
    </recommendedName>
    <alternativeName>
        <fullName evidence="1">SAICAR synthetase</fullName>
    </alternativeName>
</protein>
<evidence type="ECO:0000255" key="1">
    <source>
        <dbReference type="HAMAP-Rule" id="MF_00137"/>
    </source>
</evidence>
<gene>
    <name evidence="1" type="primary">purC</name>
    <name type="ordered locus">Sez_0023</name>
</gene>
<organism>
    <name type="scientific">Streptococcus equi subsp. zooepidemicus (strain MGCS10565)</name>
    <dbReference type="NCBI Taxonomy" id="552526"/>
    <lineage>
        <taxon>Bacteria</taxon>
        <taxon>Bacillati</taxon>
        <taxon>Bacillota</taxon>
        <taxon>Bacilli</taxon>
        <taxon>Lactobacillales</taxon>
        <taxon>Streptococcaceae</taxon>
        <taxon>Streptococcus</taxon>
    </lineage>
</organism>
<proteinExistence type="inferred from homology"/>
<feature type="chain" id="PRO_1000096017" description="Phosphoribosylaminoimidazole-succinocarboxamide synthase">
    <location>
        <begin position="1"/>
        <end position="236"/>
    </location>
</feature>
<comment type="catalytic activity">
    <reaction evidence="1">
        <text>5-amino-1-(5-phospho-D-ribosyl)imidazole-4-carboxylate + L-aspartate + ATP = (2S)-2-[5-amino-1-(5-phospho-beta-D-ribosyl)imidazole-4-carboxamido]succinate + ADP + phosphate + 2 H(+)</text>
        <dbReference type="Rhea" id="RHEA:22628"/>
        <dbReference type="ChEBI" id="CHEBI:15378"/>
        <dbReference type="ChEBI" id="CHEBI:29991"/>
        <dbReference type="ChEBI" id="CHEBI:30616"/>
        <dbReference type="ChEBI" id="CHEBI:43474"/>
        <dbReference type="ChEBI" id="CHEBI:58443"/>
        <dbReference type="ChEBI" id="CHEBI:77657"/>
        <dbReference type="ChEBI" id="CHEBI:456216"/>
        <dbReference type="EC" id="6.3.2.6"/>
    </reaction>
</comment>
<comment type="pathway">
    <text evidence="1">Purine metabolism; IMP biosynthesis via de novo pathway; 5-amino-1-(5-phospho-D-ribosyl)imidazole-4-carboxamide from 5-amino-1-(5-phospho-D-ribosyl)imidazole-4-carboxylate: step 1/2.</text>
</comment>
<comment type="similarity">
    <text evidence="1">Belongs to the SAICAR synthetase family.</text>
</comment>
<keyword id="KW-0067">ATP-binding</keyword>
<keyword id="KW-0436">Ligase</keyword>
<keyword id="KW-0547">Nucleotide-binding</keyword>
<keyword id="KW-0658">Purine biosynthesis</keyword>
<reference key="1">
    <citation type="journal article" date="2008" name="PLoS ONE">
        <title>Genome sequence of a lancefield group C Streptococcus zooepidemicus strain causing epidemic nephritis: new information about an old disease.</title>
        <authorList>
            <person name="Beres S.B."/>
            <person name="Sesso R."/>
            <person name="Pinto S.W.L."/>
            <person name="Hoe N.P."/>
            <person name="Porcella S.F."/>
            <person name="Deleo F.R."/>
            <person name="Musser J.M."/>
        </authorList>
    </citation>
    <scope>NUCLEOTIDE SEQUENCE [LARGE SCALE GENOMIC DNA]</scope>
    <source>
        <strain>MGCS10565</strain>
    </source>
</reference>
<dbReference type="EC" id="6.3.2.6" evidence="1"/>
<dbReference type="EMBL" id="CP001129">
    <property type="protein sequence ID" value="ACG61410.1"/>
    <property type="molecule type" value="Genomic_DNA"/>
</dbReference>
<dbReference type="RefSeq" id="WP_012514703.1">
    <property type="nucleotide sequence ID" value="NC_011134.1"/>
</dbReference>
<dbReference type="SMR" id="B4U5E5"/>
<dbReference type="KEGG" id="sez:Sez_0023"/>
<dbReference type="HOGENOM" id="CLU_061495_2_0_9"/>
<dbReference type="UniPathway" id="UPA00074">
    <property type="reaction ID" value="UER00131"/>
</dbReference>
<dbReference type="Proteomes" id="UP000001873">
    <property type="component" value="Chromosome"/>
</dbReference>
<dbReference type="GO" id="GO:0005524">
    <property type="term" value="F:ATP binding"/>
    <property type="evidence" value="ECO:0007669"/>
    <property type="project" value="UniProtKB-KW"/>
</dbReference>
<dbReference type="GO" id="GO:0004639">
    <property type="term" value="F:phosphoribosylaminoimidazolesuccinocarboxamide synthase activity"/>
    <property type="evidence" value="ECO:0007669"/>
    <property type="project" value="UniProtKB-UniRule"/>
</dbReference>
<dbReference type="GO" id="GO:0006189">
    <property type="term" value="P:'de novo' IMP biosynthetic process"/>
    <property type="evidence" value="ECO:0007669"/>
    <property type="project" value="UniProtKB-UniRule"/>
</dbReference>
<dbReference type="GO" id="GO:0009236">
    <property type="term" value="P:cobalamin biosynthetic process"/>
    <property type="evidence" value="ECO:0007669"/>
    <property type="project" value="InterPro"/>
</dbReference>
<dbReference type="CDD" id="cd01415">
    <property type="entry name" value="SAICAR_synt_PurC"/>
    <property type="match status" value="1"/>
</dbReference>
<dbReference type="FunFam" id="3.30.470.20:FF:000006">
    <property type="entry name" value="Phosphoribosylaminoimidazole-succinocarboxamide synthase"/>
    <property type="match status" value="1"/>
</dbReference>
<dbReference type="Gene3D" id="3.30.470.20">
    <property type="entry name" value="ATP-grasp fold, B domain"/>
    <property type="match status" value="1"/>
</dbReference>
<dbReference type="Gene3D" id="3.30.200.20">
    <property type="entry name" value="Phosphorylase Kinase, domain 1"/>
    <property type="match status" value="1"/>
</dbReference>
<dbReference type="HAMAP" id="MF_00137">
    <property type="entry name" value="SAICAR_synth"/>
    <property type="match status" value="1"/>
</dbReference>
<dbReference type="InterPro" id="IPR028923">
    <property type="entry name" value="SAICAR_synt/ADE2_N"/>
</dbReference>
<dbReference type="InterPro" id="IPR033934">
    <property type="entry name" value="SAICAR_synt_PurC"/>
</dbReference>
<dbReference type="InterPro" id="IPR001636">
    <property type="entry name" value="SAICAR_synth"/>
</dbReference>
<dbReference type="InterPro" id="IPR050089">
    <property type="entry name" value="SAICAR_synthetase"/>
</dbReference>
<dbReference type="InterPro" id="IPR018236">
    <property type="entry name" value="SAICAR_synthetase_CS"/>
</dbReference>
<dbReference type="NCBIfam" id="TIGR00081">
    <property type="entry name" value="purC"/>
    <property type="match status" value="1"/>
</dbReference>
<dbReference type="PANTHER" id="PTHR43599">
    <property type="entry name" value="MULTIFUNCTIONAL PROTEIN ADE2"/>
    <property type="match status" value="1"/>
</dbReference>
<dbReference type="PANTHER" id="PTHR43599:SF3">
    <property type="entry name" value="SI:DKEY-6E2.2"/>
    <property type="match status" value="1"/>
</dbReference>
<dbReference type="Pfam" id="PF01259">
    <property type="entry name" value="SAICAR_synt"/>
    <property type="match status" value="1"/>
</dbReference>
<dbReference type="SUPFAM" id="SSF56104">
    <property type="entry name" value="SAICAR synthase-like"/>
    <property type="match status" value="1"/>
</dbReference>
<dbReference type="PROSITE" id="PS01057">
    <property type="entry name" value="SAICAR_SYNTHETASE_1"/>
    <property type="match status" value="1"/>
</dbReference>
<dbReference type="PROSITE" id="PS01058">
    <property type="entry name" value="SAICAR_SYNTHETASE_2"/>
    <property type="match status" value="1"/>
</dbReference>
<sequence>MSNQLIYSGKAKDIYETADDGIVLISYKDQVTMLNGAHKEMIEGKGSLNNQISALIFDRLNRVGVSTHFIKQLSETEQLNKRVAIIPLEVVLRNVAAGSFSKRFGVKEGQALDEPIIELYYKNDALDDPFINDEHVSFLKLATDEQIAYIKQETHRINAYLKEWFASVGLTLVDFKLEFGFDKEGMLILADEFSPDNCRLWDNAGRHMDKDVFRRQLGSLTQAYETVLERLRALDQ</sequence>